<comment type="function">
    <text evidence="1 11">Non-canonical non-ribosomal peptide synthetase; part of the gene cluster that mediates the biosynthesis of fusaric acid, a mycotoxin with low to moderate toxicity to animals and humans, but with high phytotoxic properties (PubMed:25372119). L-aspartate is suggested as fusaric acid amino acid precursor that is activated and further processed to O-acetyl-L-homoserine by cluster enzymes aspartate kinase FUB3 and homoserine O-acetyltransferase FUB5, as well as enzymes of the primary metabolism (By similarity). The polyketide synthase (PKS) FUB1 generates the triketide trans-2-hexenal which is presumptively released by the hydrolase FUB4 and linked to the NRPS-bound amino acid precursor by NAD(P)-dependent dehydrogenase FUB6 (By similarity). FUB1, FUB4, and the non-canonical NRPS Fub8 may form an enzyme complex (By similarity). Further processing of the NRPS-bound intermediate might be carried out by FUB6 and the sulfhydrylase FUB7, enabling a spontaneous electrocyclization to close the carbon backbone of fusaric acid (By similarity). Dihydrofusaric acid is likely to be released via reduction by the thioester reductase (TR) domain of FUB8 whereupon the final oxidation to fusaric acid may (also) be performed by the FMN-dependent dehydrogenase FUB9 (By similarity).</text>
</comment>
<comment type="pathway">
    <text evidence="11">Mycotoxin biosynthesis.</text>
</comment>
<comment type="domain">
    <text evidence="1">Contains three distinct domains: an adenylation (A) domain that activates the substrate amino acid which is subsequently covalently linked as a thioester (aminoacyl-S-PCP) to the 4'-phosphopantetheine prosthetic group of the second domain, the peptidyl carrier protein (PCP) domain, as well as a thioester reductase (TR) release domain.</text>
</comment>
<comment type="disruption phenotype">
    <text evidence="11">Impairs the production of fusaric acid (PubMed:25372119).</text>
</comment>
<comment type="biotechnology">
    <text evidence="4 5 6 7 8 9 10">Fusaric acid is phytotoxic to plants such as cotton and banana (PubMed:20955724, PubMed:23922960). It has been shown to induce programmed cell death in plants (PubMed:16868776, PubMed:23838885). In addition to a mild toxicity to animals, fusaric acid exhibits acanthamoebicidal, antioomycete, and antimycobacterial activities (PubMed:17927749, PubMed:21811925, PubMed:22864988).</text>
</comment>
<organism>
    <name type="scientific">Fusarium oxysporum f. sp. lycopersici (strain 4287 / CBS 123668 / FGSC 9935 / NRRL 34936)</name>
    <name type="common">Fusarium vascular wilt of tomato</name>
    <dbReference type="NCBI Taxonomy" id="426428"/>
    <lineage>
        <taxon>Eukaryota</taxon>
        <taxon>Fungi</taxon>
        <taxon>Dikarya</taxon>
        <taxon>Ascomycota</taxon>
        <taxon>Pezizomycotina</taxon>
        <taxon>Sordariomycetes</taxon>
        <taxon>Hypocreomycetidae</taxon>
        <taxon>Hypocreales</taxon>
        <taxon>Nectriaceae</taxon>
        <taxon>Fusarium</taxon>
        <taxon>Fusarium oxysporum species complex</taxon>
    </lineage>
</organism>
<dbReference type="EC" id="2.3.1.-" evidence="13"/>
<dbReference type="EMBL" id="DS231721">
    <property type="protein sequence ID" value="KNB17113.1"/>
    <property type="molecule type" value="Genomic_DNA"/>
</dbReference>
<dbReference type="RefSeq" id="XP_018255158.1">
    <property type="nucleotide sequence ID" value="XM_018395310.1"/>
</dbReference>
<dbReference type="SMR" id="A0A0D2YG01"/>
<dbReference type="STRING" id="426428.A0A0D2YG01"/>
<dbReference type="EnsemblFungi" id="FOXG_15239T0">
    <property type="protein sequence ID" value="FOXG_15239P0"/>
    <property type="gene ID" value="FOXG_15239"/>
</dbReference>
<dbReference type="GeneID" id="28956315"/>
<dbReference type="KEGG" id="fox:FOXG_15239"/>
<dbReference type="VEuPathDB" id="FungiDB:FOXG_15239"/>
<dbReference type="OMA" id="DAPINGY"/>
<dbReference type="OrthoDB" id="107292at110618"/>
<dbReference type="Proteomes" id="UP000009097">
    <property type="component" value="Unassembled WGS sequence"/>
</dbReference>
<dbReference type="GO" id="GO:0016491">
    <property type="term" value="F:oxidoreductase activity"/>
    <property type="evidence" value="ECO:0007669"/>
    <property type="project" value="UniProtKB-KW"/>
</dbReference>
<dbReference type="GO" id="GO:0031177">
    <property type="term" value="F:phosphopantetheine binding"/>
    <property type="evidence" value="ECO:0007669"/>
    <property type="project" value="InterPro"/>
</dbReference>
<dbReference type="GO" id="GO:0016740">
    <property type="term" value="F:transferase activity"/>
    <property type="evidence" value="ECO:0007669"/>
    <property type="project" value="UniProtKB-KW"/>
</dbReference>
<dbReference type="GO" id="GO:0009058">
    <property type="term" value="P:biosynthetic process"/>
    <property type="evidence" value="ECO:0007669"/>
    <property type="project" value="UniProtKB-ARBA"/>
</dbReference>
<dbReference type="Gene3D" id="1.10.1200.10">
    <property type="entry name" value="ACP-like"/>
    <property type="match status" value="1"/>
</dbReference>
<dbReference type="Gene3D" id="3.40.50.12780">
    <property type="entry name" value="N-terminal domain of ligase-like"/>
    <property type="match status" value="1"/>
</dbReference>
<dbReference type="Gene3D" id="3.40.50.720">
    <property type="entry name" value="NAD(P)-binding Rossmann-like Domain"/>
    <property type="match status" value="1"/>
</dbReference>
<dbReference type="InterPro" id="IPR036736">
    <property type="entry name" value="ACP-like_sf"/>
</dbReference>
<dbReference type="InterPro" id="IPR051414">
    <property type="entry name" value="Adenylate-forming_Reductase"/>
</dbReference>
<dbReference type="InterPro" id="IPR020845">
    <property type="entry name" value="AMP-binding_CS"/>
</dbReference>
<dbReference type="InterPro" id="IPR000873">
    <property type="entry name" value="AMP-dep_synth/lig_dom"/>
</dbReference>
<dbReference type="InterPro" id="IPR042099">
    <property type="entry name" value="ANL_N_sf"/>
</dbReference>
<dbReference type="InterPro" id="IPR013120">
    <property type="entry name" value="Far_NAD-bd"/>
</dbReference>
<dbReference type="InterPro" id="IPR036291">
    <property type="entry name" value="NAD(P)-bd_dom_sf"/>
</dbReference>
<dbReference type="InterPro" id="IPR020806">
    <property type="entry name" value="PKS_PP-bd"/>
</dbReference>
<dbReference type="InterPro" id="IPR009081">
    <property type="entry name" value="PP-bd_ACP"/>
</dbReference>
<dbReference type="PANTHER" id="PTHR43439:SF2">
    <property type="entry name" value="ENZYME, PUTATIVE (JCVI)-RELATED"/>
    <property type="match status" value="1"/>
</dbReference>
<dbReference type="PANTHER" id="PTHR43439">
    <property type="entry name" value="PHENYLACETATE-COENZYME A LIGASE"/>
    <property type="match status" value="1"/>
</dbReference>
<dbReference type="Pfam" id="PF00501">
    <property type="entry name" value="AMP-binding"/>
    <property type="match status" value="1"/>
</dbReference>
<dbReference type="Pfam" id="PF23562">
    <property type="entry name" value="AMP-binding_C_3"/>
    <property type="match status" value="1"/>
</dbReference>
<dbReference type="Pfam" id="PF07993">
    <property type="entry name" value="NAD_binding_4"/>
    <property type="match status" value="1"/>
</dbReference>
<dbReference type="Pfam" id="PF00550">
    <property type="entry name" value="PP-binding"/>
    <property type="match status" value="1"/>
</dbReference>
<dbReference type="SMART" id="SM00823">
    <property type="entry name" value="PKS_PP"/>
    <property type="match status" value="1"/>
</dbReference>
<dbReference type="SUPFAM" id="SSF56801">
    <property type="entry name" value="Acetyl-CoA synthetase-like"/>
    <property type="match status" value="1"/>
</dbReference>
<dbReference type="SUPFAM" id="SSF47336">
    <property type="entry name" value="ACP-like"/>
    <property type="match status" value="1"/>
</dbReference>
<dbReference type="SUPFAM" id="SSF51735">
    <property type="entry name" value="NAD(P)-binding Rossmann-fold domains"/>
    <property type="match status" value="1"/>
</dbReference>
<dbReference type="PROSITE" id="PS00455">
    <property type="entry name" value="AMP_BINDING"/>
    <property type="match status" value="1"/>
</dbReference>
<dbReference type="PROSITE" id="PS50075">
    <property type="entry name" value="CARRIER"/>
    <property type="match status" value="1"/>
</dbReference>
<keyword id="KW-0511">Multifunctional enzyme</keyword>
<keyword id="KW-0521">NADP</keyword>
<keyword id="KW-0560">Oxidoreductase</keyword>
<keyword id="KW-0596">Phosphopantetheine</keyword>
<keyword id="KW-0597">Phosphoprotein</keyword>
<keyword id="KW-1185">Reference proteome</keyword>
<keyword id="KW-0808">Transferase</keyword>
<name>FUB8_FUSO4</name>
<proteinExistence type="evidence at protein level"/>
<accession>A0A0D2YG01</accession>
<gene>
    <name evidence="12" type="primary">FUB8</name>
    <name type="ORF">FOXG_15239</name>
</gene>
<protein>
    <recommendedName>
        <fullName evidence="12">Non-canonical non-ribosomal peptide synthetase FUB8</fullName>
        <ecNumber evidence="13">2.3.1.-</ecNumber>
    </recommendedName>
    <alternativeName>
        <fullName evidence="12">Fusaric acid biosynthesis protein 8</fullName>
    </alternativeName>
</protein>
<reference key="1">
    <citation type="journal article" date="2010" name="Nature">
        <title>Comparative genomics reveals mobile pathogenicity chromosomes in Fusarium.</title>
        <authorList>
            <person name="Ma L.-J."/>
            <person name="van der Does H.C."/>
            <person name="Borkovich K.A."/>
            <person name="Coleman J.J."/>
            <person name="Daboussi M.-J."/>
            <person name="Di Pietro A."/>
            <person name="Dufresne M."/>
            <person name="Freitag M."/>
            <person name="Grabherr M."/>
            <person name="Henrissat B."/>
            <person name="Houterman P.M."/>
            <person name="Kang S."/>
            <person name="Shim W.-B."/>
            <person name="Woloshuk C."/>
            <person name="Xie X."/>
            <person name="Xu J.-R."/>
            <person name="Antoniw J."/>
            <person name="Baker S.E."/>
            <person name="Bluhm B.H."/>
            <person name="Breakspear A."/>
            <person name="Brown D.W."/>
            <person name="Butchko R.A.E."/>
            <person name="Chapman S."/>
            <person name="Coulson R."/>
            <person name="Coutinho P.M."/>
            <person name="Danchin E.G.J."/>
            <person name="Diener A."/>
            <person name="Gale L.R."/>
            <person name="Gardiner D.M."/>
            <person name="Goff S."/>
            <person name="Hammond-Kosack K.E."/>
            <person name="Hilburn K."/>
            <person name="Hua-Van A."/>
            <person name="Jonkers W."/>
            <person name="Kazan K."/>
            <person name="Kodira C.D."/>
            <person name="Koehrsen M."/>
            <person name="Kumar L."/>
            <person name="Lee Y.-H."/>
            <person name="Li L."/>
            <person name="Manners J.M."/>
            <person name="Miranda-Saavedra D."/>
            <person name="Mukherjee M."/>
            <person name="Park G."/>
            <person name="Park J."/>
            <person name="Park S.-Y."/>
            <person name="Proctor R.H."/>
            <person name="Regev A."/>
            <person name="Ruiz-Roldan M.C."/>
            <person name="Sain D."/>
            <person name="Sakthikumar S."/>
            <person name="Sykes S."/>
            <person name="Schwartz D.C."/>
            <person name="Turgeon B.G."/>
            <person name="Wapinski I."/>
            <person name="Yoder O."/>
            <person name="Young S."/>
            <person name="Zeng Q."/>
            <person name="Zhou S."/>
            <person name="Galagan J."/>
            <person name="Cuomo C.A."/>
            <person name="Kistler H.C."/>
            <person name="Rep M."/>
        </authorList>
    </citation>
    <scope>NUCLEOTIDE SEQUENCE [LARGE SCALE GENOMIC DNA]</scope>
    <source>
        <strain>4287 / CBS 123668 / FGSC 9935 / NRRL 34936</strain>
    </source>
</reference>
<reference key="2">
    <citation type="submission" date="2015-03" db="UniProtKB">
        <authorList>
            <consortium name="EnsemblFungi"/>
        </authorList>
    </citation>
    <scope>IDENTIFICATION</scope>
    <source>
        <strain>4287 / CBS 123668 / FGSC 9935 / NRRL 34936</strain>
    </source>
</reference>
<reference key="3">
    <citation type="journal article" date="2006" name="Planta">
        <title>Fusaric acid induces apoptosis in saffron root-tip cells: roles of caspase-like activity, cytochrome c, and H2O2.</title>
        <authorList>
            <person name="Samadi L."/>
            <person name="Shahsavan Behboodi B."/>
        </authorList>
    </citation>
    <scope>BIOTECHNOLOGY</scope>
</reference>
<reference key="4">
    <citation type="journal article" date="2008" name="J. Appl. Microbiol.">
        <title>Bikaverin and fusaric acid from Fusarium oxysporum show antioomycete activity against Phytophthora infestans.</title>
        <authorList>
            <person name="Son S.W."/>
            <person name="Kim H.Y."/>
            <person name="Choi G.J."/>
            <person name="Lim H.K."/>
            <person name="Jang K.S."/>
            <person name="Lee S.O."/>
            <person name="Lee S."/>
            <person name="Sung N.D."/>
            <person name="Kim J.C."/>
        </authorList>
    </citation>
    <scope>BIOTECHNOLOGY</scope>
</reference>
<reference key="5">
    <citation type="journal article" date="2011" name="Arch. Pharm. Res.">
        <title>Antimycobacterial activity of fusaric acid from a mangrove endophyte and its metal complexes.</title>
        <authorList>
            <person name="Pan J.H."/>
            <person name="Chen Y."/>
            <person name="Huang Y.H."/>
            <person name="Tao Y.W."/>
            <person name="Wang J."/>
            <person name="Li Y."/>
            <person name="Peng Y."/>
            <person name="Dong T."/>
            <person name="Lai X.M."/>
            <person name="Lin Y.C."/>
        </authorList>
    </citation>
    <scope>BIOTECHNOLOGY</scope>
</reference>
<reference key="6">
    <citation type="journal article" date="2011" name="Toxicon">
        <title>Phytotoxicity of fusaric acid and analogs to cotton.</title>
        <authorList>
            <person name="Stipanovic R.D."/>
            <person name="Puckhaber L.S."/>
            <person name="Liu J."/>
            <person name="Bell A.A."/>
        </authorList>
    </citation>
    <scope>BIOTECHNOLOGY</scope>
</reference>
<reference key="7">
    <citation type="journal article" date="2012" name="Planta Med.">
        <title>In vitro acanthamoebicidal activity of fusaric acid and dehydrofusaric acid from an endophytic fungus Fusarium sp. Tlau3.</title>
        <authorList>
            <person name="Boonman N."/>
            <person name="Prachya S."/>
            <person name="Boonmee A."/>
            <person name="Kittakoop P."/>
            <person name="Wiyakrutta S."/>
            <person name="Sriubolmas N."/>
            <person name="Warit S."/>
            <person name="Dharmkrong-At Chusattayanond A."/>
        </authorList>
    </citation>
    <scope>BIOTECHNOLOGY</scope>
</reference>
<reference key="8">
    <citation type="journal article" date="2013" name="Planta">
        <title>Fusaric acid induction of programmed cell death modulated through nitric oxide signalling in tobacco suspension cells.</title>
        <authorList>
            <person name="Jiao J."/>
            <person name="Zhou B."/>
            <person name="Zhu X."/>
            <person name="Gao Z."/>
            <person name="Liang Y."/>
        </authorList>
    </citation>
    <scope>BIOTECHNOLOGY</scope>
</reference>
<reference key="9">
    <citation type="journal article" date="2013" name="PLoS ONE">
        <title>Contamination of bananas with beauvericin and fusaric acid produced by Fusarium oxysporum f. sp. cubense.</title>
        <authorList>
            <person name="Li C."/>
            <person name="Zuo C."/>
            <person name="Deng G."/>
            <person name="Kuang R."/>
            <person name="Yang Q."/>
            <person name="Hu C."/>
            <person name="Sheng O."/>
            <person name="Zhang S."/>
            <person name="Ma L."/>
            <person name="Wei Y."/>
            <person name="Yang J."/>
            <person name="Liu S."/>
            <person name="Biswas M.K."/>
            <person name="Viljoen A."/>
            <person name="Yi G."/>
        </authorList>
    </citation>
    <scope>BIOTECHNOLOGY</scope>
</reference>
<reference key="10">
    <citation type="journal article" date="2015" name="Mol. Plant Microbe Interact.">
        <title>Identification of a 12-gene fusaric acid biosynthetic gene cluster in Fusarium species through comparative and functional genomics.</title>
        <authorList>
            <person name="Brown D.W."/>
            <person name="Lee S.H."/>
            <person name="Kim L.H."/>
            <person name="Ryu J.G."/>
            <person name="Lee S."/>
            <person name="Seo Y."/>
            <person name="Kim Y.H."/>
            <person name="Busman M."/>
            <person name="Yun S.H."/>
            <person name="Proctor R.H."/>
            <person name="Lee T."/>
        </authorList>
    </citation>
    <scope>FUNCTION</scope>
    <scope>DISRUPTION PHENOTYPE</scope>
    <scope>CATALYTIC ACTIVITY</scope>
</reference>
<evidence type="ECO:0000250" key="1">
    <source>
        <dbReference type="UniProtKB" id="S0DXJ2"/>
    </source>
</evidence>
<evidence type="ECO:0000255" key="2"/>
<evidence type="ECO:0000255" key="3">
    <source>
        <dbReference type="PROSITE-ProRule" id="PRU00258"/>
    </source>
</evidence>
<evidence type="ECO:0000269" key="4">
    <source>
    </source>
</evidence>
<evidence type="ECO:0000269" key="5">
    <source>
    </source>
</evidence>
<evidence type="ECO:0000269" key="6">
    <source>
    </source>
</evidence>
<evidence type="ECO:0000269" key="7">
    <source>
    </source>
</evidence>
<evidence type="ECO:0000269" key="8">
    <source>
    </source>
</evidence>
<evidence type="ECO:0000269" key="9">
    <source>
    </source>
</evidence>
<evidence type="ECO:0000269" key="10">
    <source>
    </source>
</evidence>
<evidence type="ECO:0000269" key="11">
    <source>
    </source>
</evidence>
<evidence type="ECO:0000303" key="12">
    <source>
    </source>
</evidence>
<evidence type="ECO:0000305" key="13">
    <source>
    </source>
</evidence>
<feature type="chain" id="PRO_0000437341" description="Non-canonical non-ribosomal peptide synthetase FUB8">
    <location>
        <begin position="1"/>
        <end position="1036"/>
    </location>
</feature>
<feature type="domain" description="Carrier" evidence="3">
    <location>
        <begin position="544"/>
        <end position="621"/>
    </location>
</feature>
<feature type="region of interest" description="Adenylation (A) domain" evidence="2">
    <location>
        <begin position="21"/>
        <end position="343"/>
    </location>
</feature>
<feature type="region of interest" description="Thioester reductase (TR) domain" evidence="2">
    <location>
        <begin position="658"/>
        <end position="899"/>
    </location>
</feature>
<feature type="modified residue" description="O-(pantetheine 4'-phosphoryl)serine" evidence="3">
    <location>
        <position position="579"/>
    </location>
</feature>
<sequence>MGSISHLPAYGHRLLPVLIDEIARDEPDRVLFYTPRNGQPSQGYDEVNTKIFANSINRLCGWLDSQLGSPAGPRTIAYIGQNDLRYFIMMIASTKLGHRLLLSSPRNSVEGHVSLIKQSGCEFWIASSGLDHHEFLQDLQIPSVEAPELPQLLDPTPVKPYVYQKSWNEGKSDVLALLHTSGSTGLPKLVPVYLETAATVDGFHLMEPTNGKRPTGVEWTGTRQLCAMPLFHVAGICLGLYSAVFFNWTVVLPSVGPIMQHVIEDALDHISLDSAFISPSVLQDISKSPRVLEKLSKLKFITSAGGPIPQSVGDLIHPRVPIMQTMGMTEGQWLASVVTHPDEWAYYYFHPRTGVEMRPYSEDLSELVFVQNPKLSATQPVFKTFPELDIWETKDLYSRHPKHPDLWKYEMRRDDLIILSNGEKFNPLAAEGKLISHPWIAAAYLTGRGRFQTAALLYPDENSLDKSDDIITDNVWPTFEEVNKSLPAFAQIHRDFVKIVRTPFPRTPKGTLARNETEKAFTADINAIYDRSTHGKPSVHINGTTEDVVRSGIREAIETVSGLVDLKDDDNIFTRGFDSLHVIRLAGLLSSAFDQPLEVEAGTIYTNPTISQLAHTVWSHLEHGPQDKVHHSEVTREMLAKYAQAFEPPREAKEHIVLTGTTGEIGSYLLDVLCNNDKVAKVWCLNRSADAFQRQVDSAKSKGLSSSWKSKAKFVRYDVASENLGLSQDGLEEIKNEATAIIHNAWEVNFNLPLSSFEPQFIGLKSLVDVCRESRQKIRFFFVSSISAAMNWPSDLLGPVPEASIPRFDAPINGYGSSKLVAEHLLSKAARSGVLSLSILRVGQVAGPVKTLGEGSIWTRRDWVPAIIDASAHLRALPLDLGSASILDWIPIDLLTEVIGQLVVPVNPVVGQENYYNLLNPRTPSWTDSLPGLKARLEASFSDTFEIIPLQEWISRLRGAEKTIVKEVSEGSSETAIRAQSGLKLLAFFEMLASGKEGSRGLEWAKANTLAQSSFLACMEPVSSAWFDTWLKQWGY</sequence>